<protein>
    <recommendedName>
        <fullName>Protein psi1</fullName>
    </recommendedName>
    <alternativeName>
        <fullName>Protein psi</fullName>
    </alternativeName>
</protein>
<name>PSI1_SCHPO</name>
<organism>
    <name type="scientific">Schizosaccharomyces pombe (strain 972 / ATCC 24843)</name>
    <name type="common">Fission yeast</name>
    <dbReference type="NCBI Taxonomy" id="284812"/>
    <lineage>
        <taxon>Eukaryota</taxon>
        <taxon>Fungi</taxon>
        <taxon>Dikarya</taxon>
        <taxon>Ascomycota</taxon>
        <taxon>Taphrinomycotina</taxon>
        <taxon>Schizosaccharomycetes</taxon>
        <taxon>Schizosaccharomycetales</taxon>
        <taxon>Schizosaccharomycetaceae</taxon>
        <taxon>Schizosaccharomyces</taxon>
    </lineage>
</organism>
<feature type="chain" id="PRO_0000071130" description="Protein psi1">
    <location>
        <begin position="1"/>
        <end position="379"/>
    </location>
</feature>
<feature type="domain" description="J" evidence="1">
    <location>
        <begin position="1"/>
        <end position="70"/>
    </location>
</feature>
<feature type="region of interest" description="Disordered" evidence="2">
    <location>
        <begin position="69"/>
        <end position="95"/>
    </location>
</feature>
<feature type="region of interest" description="Disordered" evidence="2">
    <location>
        <begin position="176"/>
        <end position="205"/>
    </location>
</feature>
<feature type="compositionally biased region" description="Gly residues" evidence="2">
    <location>
        <begin position="81"/>
        <end position="95"/>
    </location>
</feature>
<feature type="sequence conflict" description="In Ref. 1; AAA74732." evidence="3" ref="1">
    <original>G</original>
    <variation>C</variation>
    <location>
        <position position="91"/>
    </location>
</feature>
<proteinExistence type="evidence at transcript level"/>
<comment type="function">
    <text>Required for nuclear migration during mitosis. It is required for the normal initiation of translation.</text>
</comment>
<keyword id="KW-0143">Chaperone</keyword>
<keyword id="KW-1185">Reference proteome</keyword>
<evidence type="ECO:0000255" key="1">
    <source>
        <dbReference type="PROSITE-ProRule" id="PRU00286"/>
    </source>
</evidence>
<evidence type="ECO:0000256" key="2">
    <source>
        <dbReference type="SAM" id="MobiDB-lite"/>
    </source>
</evidence>
<evidence type="ECO:0000305" key="3"/>
<sequence>MVADTKLYDCLEVRPEASEAELKKAYRKLALKYHPDKNPNGEKKFKEISLAYEVLSDPQRRKLYDQYGITEGNAAPPPPGAEGGPGAGFGGFPGAGPGGARTFHFNMGGPGGAQFFSASDPNDIFERVFGHAFAGGGGMGGGMGGMGGMDDDMDMDGGFGTRTRGGGMPGGFANMFGGGGAGPHARRSHPSFGGSRPSQPPAQNEVITRPLNVSLEDLFTGCTKKMKISRHIIDASGQSVKADRILEIKVKPGWKAGTKIKFAGEGDEKPDGTVQDIQFVLAEKPHPVFTRSGDDLRMQVELSLKEALLGFSKQISTIDGKKLKVSSSLPTQPGYEITYPGFGMPLPKNPSQRGNMIIECKVKFPTELTPAQKTAAEAF</sequence>
<reference key="1">
    <citation type="journal article" date="1995" name="Biochim. Biophys. Acta">
        <title>A cDNA of Schizosaccharomyces pombe encoding a homologue of DnaJ-like protein.</title>
        <authorList>
            <person name="Park S.-K."/>
            <person name="Chon S.-K."/>
            <person name="Yoo H.-S."/>
        </authorList>
    </citation>
    <scope>NUCLEOTIDE SEQUENCE [MRNA]</scope>
</reference>
<reference key="2">
    <citation type="journal article" date="2002" name="Nature">
        <title>The genome sequence of Schizosaccharomyces pombe.</title>
        <authorList>
            <person name="Wood V."/>
            <person name="Gwilliam R."/>
            <person name="Rajandream M.A."/>
            <person name="Lyne M.H."/>
            <person name="Lyne R."/>
            <person name="Stewart A."/>
            <person name="Sgouros J.G."/>
            <person name="Peat N."/>
            <person name="Hayles J."/>
            <person name="Baker S.G."/>
            <person name="Basham D."/>
            <person name="Bowman S."/>
            <person name="Brooks K."/>
            <person name="Brown D."/>
            <person name="Brown S."/>
            <person name="Chillingworth T."/>
            <person name="Churcher C.M."/>
            <person name="Collins M."/>
            <person name="Connor R."/>
            <person name="Cronin A."/>
            <person name="Davis P."/>
            <person name="Feltwell T."/>
            <person name="Fraser A."/>
            <person name="Gentles S."/>
            <person name="Goble A."/>
            <person name="Hamlin N."/>
            <person name="Harris D.E."/>
            <person name="Hidalgo J."/>
            <person name="Hodgson G."/>
            <person name="Holroyd S."/>
            <person name="Hornsby T."/>
            <person name="Howarth S."/>
            <person name="Huckle E.J."/>
            <person name="Hunt S."/>
            <person name="Jagels K."/>
            <person name="James K.D."/>
            <person name="Jones L."/>
            <person name="Jones M."/>
            <person name="Leather S."/>
            <person name="McDonald S."/>
            <person name="McLean J."/>
            <person name="Mooney P."/>
            <person name="Moule S."/>
            <person name="Mungall K.L."/>
            <person name="Murphy L.D."/>
            <person name="Niblett D."/>
            <person name="Odell C."/>
            <person name="Oliver K."/>
            <person name="O'Neil S."/>
            <person name="Pearson D."/>
            <person name="Quail M.A."/>
            <person name="Rabbinowitsch E."/>
            <person name="Rutherford K.M."/>
            <person name="Rutter S."/>
            <person name="Saunders D."/>
            <person name="Seeger K."/>
            <person name="Sharp S."/>
            <person name="Skelton J."/>
            <person name="Simmonds M.N."/>
            <person name="Squares R."/>
            <person name="Squares S."/>
            <person name="Stevens K."/>
            <person name="Taylor K."/>
            <person name="Taylor R.G."/>
            <person name="Tivey A."/>
            <person name="Walsh S.V."/>
            <person name="Warren T."/>
            <person name="Whitehead S."/>
            <person name="Woodward J.R."/>
            <person name="Volckaert G."/>
            <person name="Aert R."/>
            <person name="Robben J."/>
            <person name="Grymonprez B."/>
            <person name="Weltjens I."/>
            <person name="Vanstreels E."/>
            <person name="Rieger M."/>
            <person name="Schaefer M."/>
            <person name="Mueller-Auer S."/>
            <person name="Gabel C."/>
            <person name="Fuchs M."/>
            <person name="Duesterhoeft A."/>
            <person name="Fritzc C."/>
            <person name="Holzer E."/>
            <person name="Moestl D."/>
            <person name="Hilbert H."/>
            <person name="Borzym K."/>
            <person name="Langer I."/>
            <person name="Beck A."/>
            <person name="Lehrach H."/>
            <person name="Reinhardt R."/>
            <person name="Pohl T.M."/>
            <person name="Eger P."/>
            <person name="Zimmermann W."/>
            <person name="Wedler H."/>
            <person name="Wambutt R."/>
            <person name="Purnelle B."/>
            <person name="Goffeau A."/>
            <person name="Cadieu E."/>
            <person name="Dreano S."/>
            <person name="Gloux S."/>
            <person name="Lelaure V."/>
            <person name="Mottier S."/>
            <person name="Galibert F."/>
            <person name="Aves S.J."/>
            <person name="Xiang Z."/>
            <person name="Hunt C."/>
            <person name="Moore K."/>
            <person name="Hurst S.M."/>
            <person name="Lucas M."/>
            <person name="Rochet M."/>
            <person name="Gaillardin C."/>
            <person name="Tallada V.A."/>
            <person name="Garzon A."/>
            <person name="Thode G."/>
            <person name="Daga R.R."/>
            <person name="Cruzado L."/>
            <person name="Jimenez J."/>
            <person name="Sanchez M."/>
            <person name="del Rey F."/>
            <person name="Benito J."/>
            <person name="Dominguez A."/>
            <person name="Revuelta J.L."/>
            <person name="Moreno S."/>
            <person name="Armstrong J."/>
            <person name="Forsburg S.L."/>
            <person name="Cerutti L."/>
            <person name="Lowe T."/>
            <person name="McCombie W.R."/>
            <person name="Paulsen I."/>
            <person name="Potashkin J."/>
            <person name="Shpakovski G.V."/>
            <person name="Ussery D."/>
            <person name="Barrell B.G."/>
            <person name="Nurse P."/>
        </authorList>
    </citation>
    <scope>NUCLEOTIDE SEQUENCE [LARGE SCALE GENOMIC DNA]</scope>
    <source>
        <strain>972 / ATCC 24843</strain>
    </source>
</reference>
<accession>Q09912</accession>
<accession>Q9UU92</accession>
<gene>
    <name type="primary">psi1</name>
    <name type="synonym">psi</name>
    <name type="ORF">SPCC830.07c</name>
</gene>
<dbReference type="EMBL" id="L37753">
    <property type="protein sequence ID" value="AAA74732.1"/>
    <property type="molecule type" value="mRNA"/>
</dbReference>
<dbReference type="EMBL" id="CU329672">
    <property type="protein sequence ID" value="CAB52880.1"/>
    <property type="molecule type" value="Genomic_DNA"/>
</dbReference>
<dbReference type="PIR" id="S55900">
    <property type="entry name" value="S55900"/>
</dbReference>
<dbReference type="PIR" id="T41633">
    <property type="entry name" value="T41633"/>
</dbReference>
<dbReference type="RefSeq" id="NP_588477.1">
    <property type="nucleotide sequence ID" value="NM_001023468.2"/>
</dbReference>
<dbReference type="SMR" id="Q09912"/>
<dbReference type="BioGRID" id="275576">
    <property type="interactions" value="4"/>
</dbReference>
<dbReference type="FunCoup" id="Q09912">
    <property type="interactions" value="396"/>
</dbReference>
<dbReference type="STRING" id="284812.Q09912"/>
<dbReference type="iPTMnet" id="Q09912"/>
<dbReference type="PaxDb" id="4896-SPCC830.07c.1"/>
<dbReference type="EnsemblFungi" id="SPCC830.07c.1">
    <property type="protein sequence ID" value="SPCC830.07c.1:pep"/>
    <property type="gene ID" value="SPCC830.07c"/>
</dbReference>
<dbReference type="GeneID" id="2539002"/>
<dbReference type="KEGG" id="spo:2539002"/>
<dbReference type="PomBase" id="SPCC830.07c">
    <property type="gene designation" value="psi1"/>
</dbReference>
<dbReference type="VEuPathDB" id="FungiDB:SPCC830.07c"/>
<dbReference type="eggNOG" id="KOG0714">
    <property type="taxonomic scope" value="Eukaryota"/>
</dbReference>
<dbReference type="HOGENOM" id="CLU_017633_0_0_1"/>
<dbReference type="InParanoid" id="Q09912"/>
<dbReference type="OMA" id="MPIRKEG"/>
<dbReference type="PhylomeDB" id="Q09912"/>
<dbReference type="PRO" id="PR:Q09912"/>
<dbReference type="Proteomes" id="UP000002485">
    <property type="component" value="Chromosome III"/>
</dbReference>
<dbReference type="GO" id="GO:0005829">
    <property type="term" value="C:cytosol"/>
    <property type="evidence" value="ECO:0007005"/>
    <property type="project" value="PomBase"/>
</dbReference>
<dbReference type="GO" id="GO:0005634">
    <property type="term" value="C:nucleus"/>
    <property type="evidence" value="ECO:0007005"/>
    <property type="project" value="PomBase"/>
</dbReference>
<dbReference type="GO" id="GO:0140453">
    <property type="term" value="C:protein aggregate center"/>
    <property type="evidence" value="ECO:0000314"/>
    <property type="project" value="PomBase"/>
</dbReference>
<dbReference type="GO" id="GO:0030544">
    <property type="term" value="F:Hsp70 protein binding"/>
    <property type="evidence" value="ECO:0000255"/>
    <property type="project" value="PomBase"/>
</dbReference>
<dbReference type="GO" id="GO:0051087">
    <property type="term" value="F:protein-folding chaperone binding"/>
    <property type="evidence" value="ECO:0000318"/>
    <property type="project" value="GO_Central"/>
</dbReference>
<dbReference type="GO" id="GO:0051082">
    <property type="term" value="F:unfolded protein binding"/>
    <property type="evidence" value="ECO:0000318"/>
    <property type="project" value="GO_Central"/>
</dbReference>
<dbReference type="GO" id="GO:0051085">
    <property type="term" value="P:chaperone cofactor-dependent protein refolding"/>
    <property type="evidence" value="ECO:0000318"/>
    <property type="project" value="GO_Central"/>
</dbReference>
<dbReference type="GO" id="GO:0140455">
    <property type="term" value="P:cytoplasm protein quality control"/>
    <property type="evidence" value="ECO:0000303"/>
    <property type="project" value="PomBase"/>
</dbReference>
<dbReference type="GO" id="GO:0006413">
    <property type="term" value="P:translational initiation"/>
    <property type="evidence" value="ECO:0000318"/>
    <property type="project" value="GO_Central"/>
</dbReference>
<dbReference type="CDD" id="cd06257">
    <property type="entry name" value="DnaJ"/>
    <property type="match status" value="1"/>
</dbReference>
<dbReference type="CDD" id="cd10747">
    <property type="entry name" value="DnaJ_C"/>
    <property type="match status" value="1"/>
</dbReference>
<dbReference type="FunFam" id="2.60.260.20:FF:000002">
    <property type="entry name" value="Dnaj homolog subfamily b member"/>
    <property type="match status" value="1"/>
</dbReference>
<dbReference type="FunFam" id="2.60.260.20:FF:000013">
    <property type="entry name" value="DnaJ subfamily B member 11"/>
    <property type="match status" value="1"/>
</dbReference>
<dbReference type="Gene3D" id="1.10.287.110">
    <property type="entry name" value="DnaJ domain"/>
    <property type="match status" value="1"/>
</dbReference>
<dbReference type="Gene3D" id="2.60.260.20">
    <property type="entry name" value="Urease metallochaperone UreE, N-terminal domain"/>
    <property type="match status" value="2"/>
</dbReference>
<dbReference type="InterPro" id="IPR002939">
    <property type="entry name" value="DnaJ_C"/>
</dbReference>
<dbReference type="InterPro" id="IPR001623">
    <property type="entry name" value="DnaJ_domain"/>
</dbReference>
<dbReference type="InterPro" id="IPR018253">
    <property type="entry name" value="DnaJ_domain_CS"/>
</dbReference>
<dbReference type="InterPro" id="IPR051339">
    <property type="entry name" value="DnaJ_subfamily_B"/>
</dbReference>
<dbReference type="InterPro" id="IPR008971">
    <property type="entry name" value="HSP40/DnaJ_pept-bd"/>
</dbReference>
<dbReference type="InterPro" id="IPR036869">
    <property type="entry name" value="J_dom_sf"/>
</dbReference>
<dbReference type="PANTHER" id="PTHR24078:SF553">
    <property type="entry name" value="DNAJ HOMOLOG SUBFAMILY B MEMBER 5"/>
    <property type="match status" value="1"/>
</dbReference>
<dbReference type="PANTHER" id="PTHR24078">
    <property type="entry name" value="DNAJ HOMOLOG SUBFAMILY C MEMBER"/>
    <property type="match status" value="1"/>
</dbReference>
<dbReference type="Pfam" id="PF00226">
    <property type="entry name" value="DnaJ"/>
    <property type="match status" value="1"/>
</dbReference>
<dbReference type="Pfam" id="PF01556">
    <property type="entry name" value="DnaJ_C"/>
    <property type="match status" value="1"/>
</dbReference>
<dbReference type="PRINTS" id="PR00625">
    <property type="entry name" value="JDOMAIN"/>
</dbReference>
<dbReference type="SMART" id="SM00271">
    <property type="entry name" value="DnaJ"/>
    <property type="match status" value="1"/>
</dbReference>
<dbReference type="SUPFAM" id="SSF46565">
    <property type="entry name" value="Chaperone J-domain"/>
    <property type="match status" value="1"/>
</dbReference>
<dbReference type="SUPFAM" id="SSF49493">
    <property type="entry name" value="HSP40/DnaJ peptide-binding domain"/>
    <property type="match status" value="2"/>
</dbReference>
<dbReference type="PROSITE" id="PS00636">
    <property type="entry name" value="DNAJ_1"/>
    <property type="match status" value="1"/>
</dbReference>
<dbReference type="PROSITE" id="PS50076">
    <property type="entry name" value="DNAJ_2"/>
    <property type="match status" value="1"/>
</dbReference>